<organism>
    <name type="scientific">Thermotoga sp. (strain RQ2)</name>
    <dbReference type="NCBI Taxonomy" id="126740"/>
    <lineage>
        <taxon>Bacteria</taxon>
        <taxon>Thermotogati</taxon>
        <taxon>Thermotogota</taxon>
        <taxon>Thermotogae</taxon>
        <taxon>Thermotogales</taxon>
        <taxon>Thermotogaceae</taxon>
        <taxon>Thermotoga</taxon>
    </lineage>
</organism>
<proteinExistence type="inferred from homology"/>
<sequence>MKVSEFDYELPSELIAQEPVEPRDASRLMVLHRKTQRIEHRIFREIIEYLEPGDLLVLNVSKVIPARLYARKKTGASIEILLIERLEEGIWKCLVRPGQKVKKGTELVIDEDLSAVCLGRGEDGTRILKFQPQDDRLIFEKGRTPLPPYIKNEVPLERYQTVYAKEEGSVAAPTAGLHFTPELIEKLKKKGVQFAEVVLHVGIGTFRPVKVEEVEKHKMHEEFYQVTKETIKKLRETRERGNRIVAVGTTTVRTLETIARLPEQEEYVGKTDLFIYPPFEFKLVDALITNFHLPRSTLLMLVAAFAGKDFVMEAYREAVKRRYRFFSFGDAMLIL</sequence>
<comment type="function">
    <text evidence="1">Transfers and isomerizes the ribose moiety from AdoMet to the 7-aminomethyl group of 7-deazaguanine (preQ1-tRNA) to give epoxyqueuosine (oQ-tRNA).</text>
</comment>
<comment type="catalytic activity">
    <reaction evidence="1">
        <text>7-aminomethyl-7-carbaguanosine(34) in tRNA + S-adenosyl-L-methionine = epoxyqueuosine(34) in tRNA + adenine + L-methionine + 2 H(+)</text>
        <dbReference type="Rhea" id="RHEA:32155"/>
        <dbReference type="Rhea" id="RHEA-COMP:10342"/>
        <dbReference type="Rhea" id="RHEA-COMP:18582"/>
        <dbReference type="ChEBI" id="CHEBI:15378"/>
        <dbReference type="ChEBI" id="CHEBI:16708"/>
        <dbReference type="ChEBI" id="CHEBI:57844"/>
        <dbReference type="ChEBI" id="CHEBI:59789"/>
        <dbReference type="ChEBI" id="CHEBI:82833"/>
        <dbReference type="ChEBI" id="CHEBI:194443"/>
        <dbReference type="EC" id="2.4.99.17"/>
    </reaction>
</comment>
<comment type="pathway">
    <text evidence="1">tRNA modification; tRNA-queuosine biosynthesis.</text>
</comment>
<comment type="subunit">
    <text evidence="1">Monomer.</text>
</comment>
<comment type="subcellular location">
    <subcellularLocation>
        <location evidence="1">Cytoplasm</location>
    </subcellularLocation>
</comment>
<comment type="similarity">
    <text evidence="1">Belongs to the QueA family.</text>
</comment>
<dbReference type="EC" id="2.4.99.17" evidence="1"/>
<dbReference type="EMBL" id="CP000969">
    <property type="protein sequence ID" value="ACB08718.1"/>
    <property type="molecule type" value="Genomic_DNA"/>
</dbReference>
<dbReference type="RefSeq" id="WP_011943008.1">
    <property type="nucleotide sequence ID" value="NC_010483.1"/>
</dbReference>
<dbReference type="KEGG" id="trq:TRQ2_0362"/>
<dbReference type="HOGENOM" id="CLU_039110_1_0_0"/>
<dbReference type="UniPathway" id="UPA00392"/>
<dbReference type="Proteomes" id="UP000001687">
    <property type="component" value="Chromosome"/>
</dbReference>
<dbReference type="GO" id="GO:0005737">
    <property type="term" value="C:cytoplasm"/>
    <property type="evidence" value="ECO:0007669"/>
    <property type="project" value="UniProtKB-SubCell"/>
</dbReference>
<dbReference type="GO" id="GO:0051075">
    <property type="term" value="F:S-adenosylmethionine:tRNA ribosyltransferase-isomerase activity"/>
    <property type="evidence" value="ECO:0007669"/>
    <property type="project" value="UniProtKB-EC"/>
</dbReference>
<dbReference type="GO" id="GO:0008616">
    <property type="term" value="P:queuosine biosynthetic process"/>
    <property type="evidence" value="ECO:0007669"/>
    <property type="project" value="UniProtKB-UniRule"/>
</dbReference>
<dbReference type="GO" id="GO:0002099">
    <property type="term" value="P:tRNA wobble guanine modification"/>
    <property type="evidence" value="ECO:0007669"/>
    <property type="project" value="TreeGrafter"/>
</dbReference>
<dbReference type="FunFam" id="2.40.10.240:FF:000002">
    <property type="entry name" value="S-adenosylmethionine:tRNA ribosyltransferase-isomerase"/>
    <property type="match status" value="1"/>
</dbReference>
<dbReference type="FunFam" id="3.40.1780.10:FF:000001">
    <property type="entry name" value="S-adenosylmethionine:tRNA ribosyltransferase-isomerase"/>
    <property type="match status" value="1"/>
</dbReference>
<dbReference type="Gene3D" id="2.40.10.240">
    <property type="entry name" value="QueA-like"/>
    <property type="match status" value="1"/>
</dbReference>
<dbReference type="Gene3D" id="3.40.1780.10">
    <property type="entry name" value="QueA-like"/>
    <property type="match status" value="1"/>
</dbReference>
<dbReference type="HAMAP" id="MF_00113">
    <property type="entry name" value="QueA"/>
    <property type="match status" value="1"/>
</dbReference>
<dbReference type="InterPro" id="IPR003699">
    <property type="entry name" value="QueA"/>
</dbReference>
<dbReference type="InterPro" id="IPR042118">
    <property type="entry name" value="QueA_dom1"/>
</dbReference>
<dbReference type="InterPro" id="IPR042119">
    <property type="entry name" value="QueA_dom2"/>
</dbReference>
<dbReference type="InterPro" id="IPR036100">
    <property type="entry name" value="QueA_sf"/>
</dbReference>
<dbReference type="NCBIfam" id="NF001140">
    <property type="entry name" value="PRK00147.1"/>
    <property type="match status" value="1"/>
</dbReference>
<dbReference type="NCBIfam" id="TIGR00113">
    <property type="entry name" value="queA"/>
    <property type="match status" value="1"/>
</dbReference>
<dbReference type="PANTHER" id="PTHR30307">
    <property type="entry name" value="S-ADENOSYLMETHIONINE:TRNA RIBOSYLTRANSFERASE-ISOMERASE"/>
    <property type="match status" value="1"/>
</dbReference>
<dbReference type="PANTHER" id="PTHR30307:SF0">
    <property type="entry name" value="S-ADENOSYLMETHIONINE:TRNA RIBOSYLTRANSFERASE-ISOMERASE"/>
    <property type="match status" value="1"/>
</dbReference>
<dbReference type="Pfam" id="PF02547">
    <property type="entry name" value="Queuosine_synth"/>
    <property type="match status" value="1"/>
</dbReference>
<dbReference type="SUPFAM" id="SSF111337">
    <property type="entry name" value="QueA-like"/>
    <property type="match status" value="1"/>
</dbReference>
<evidence type="ECO:0000255" key="1">
    <source>
        <dbReference type="HAMAP-Rule" id="MF_00113"/>
    </source>
</evidence>
<gene>
    <name evidence="1" type="primary">queA</name>
    <name type="ordered locus">TRQ2_0362</name>
</gene>
<name>QUEA_THESQ</name>
<keyword id="KW-0963">Cytoplasm</keyword>
<keyword id="KW-0671">Queuosine biosynthesis</keyword>
<keyword id="KW-0949">S-adenosyl-L-methionine</keyword>
<keyword id="KW-0808">Transferase</keyword>
<protein>
    <recommendedName>
        <fullName evidence="1">S-adenosylmethionine:tRNA ribosyltransferase-isomerase</fullName>
        <ecNumber evidence="1">2.4.99.17</ecNumber>
    </recommendedName>
    <alternativeName>
        <fullName evidence="1">Queuosine biosynthesis protein QueA</fullName>
    </alternativeName>
</protein>
<reference key="1">
    <citation type="journal article" date="2011" name="J. Bacteriol.">
        <title>Genome sequence of Thermotoga sp. strain RQ2, a hyperthermophilic bacterium isolated from a geothermally heated region of the seafloor near Ribeira Quente, the Azores.</title>
        <authorList>
            <person name="Swithers K.S."/>
            <person name="DiPippo J.L."/>
            <person name="Bruce D.C."/>
            <person name="Detter C."/>
            <person name="Tapia R."/>
            <person name="Han S."/>
            <person name="Saunders E."/>
            <person name="Goodwin L.A."/>
            <person name="Han J."/>
            <person name="Woyke T."/>
            <person name="Pitluck S."/>
            <person name="Pennacchio L."/>
            <person name="Nolan M."/>
            <person name="Mikhailova N."/>
            <person name="Lykidis A."/>
            <person name="Land M.L."/>
            <person name="Brettin T."/>
            <person name="Stetter K.O."/>
            <person name="Nelson K.E."/>
            <person name="Gogarten J.P."/>
            <person name="Noll K.M."/>
        </authorList>
    </citation>
    <scope>NUCLEOTIDE SEQUENCE [LARGE SCALE GENOMIC DNA]</scope>
    <source>
        <strain>RQ2</strain>
    </source>
</reference>
<feature type="chain" id="PRO_1000094826" description="S-adenosylmethionine:tRNA ribosyltransferase-isomerase">
    <location>
        <begin position="1"/>
        <end position="335"/>
    </location>
</feature>
<accession>B1L8S0</accession>